<sequence length="219" mass="22895">MTQDELKKAVGWAALQYVQPGTIVGVGTGSTAAHFIDALGTMKGQIEGAVSSSDASTEKLKGLGIHVFDLNEVDSLGIYVDGADEINGHMQMIKGGGAALTREKIIASVAEKFICIADASKQVDILGKFPLPVEVIPMARSAVARQLVKLGGRPEYRQNVVTDNGNVILDVYGMEILDPIALENAINAIPGVVTVGLFANRGADVALIGTPDGVKTIVK</sequence>
<feature type="chain" id="PRO_1000016985" description="Ribose-5-phosphate isomerase A">
    <location>
        <begin position="1"/>
        <end position="219"/>
    </location>
</feature>
<feature type="active site" description="Proton acceptor" evidence="1">
    <location>
        <position position="103"/>
    </location>
</feature>
<feature type="binding site" evidence="1">
    <location>
        <begin position="28"/>
        <end position="31"/>
    </location>
    <ligand>
        <name>substrate</name>
    </ligand>
</feature>
<feature type="binding site" evidence="1">
    <location>
        <begin position="81"/>
        <end position="84"/>
    </location>
    <ligand>
        <name>substrate</name>
    </ligand>
</feature>
<feature type="binding site" evidence="1">
    <location>
        <begin position="94"/>
        <end position="97"/>
    </location>
    <ligand>
        <name>substrate</name>
    </ligand>
</feature>
<feature type="binding site" evidence="1">
    <location>
        <position position="121"/>
    </location>
    <ligand>
        <name>substrate</name>
    </ligand>
</feature>
<accession>Q57K52</accession>
<protein>
    <recommendedName>
        <fullName evidence="1">Ribose-5-phosphate isomerase A</fullName>
        <ecNumber evidence="1">5.3.1.6</ecNumber>
    </recommendedName>
    <alternativeName>
        <fullName evidence="1">Phosphoriboisomerase A</fullName>
        <shortName evidence="1">PRI</shortName>
    </alternativeName>
</protein>
<evidence type="ECO:0000255" key="1">
    <source>
        <dbReference type="HAMAP-Rule" id="MF_00170"/>
    </source>
</evidence>
<organism>
    <name type="scientific">Salmonella choleraesuis (strain SC-B67)</name>
    <dbReference type="NCBI Taxonomy" id="321314"/>
    <lineage>
        <taxon>Bacteria</taxon>
        <taxon>Pseudomonadati</taxon>
        <taxon>Pseudomonadota</taxon>
        <taxon>Gammaproteobacteria</taxon>
        <taxon>Enterobacterales</taxon>
        <taxon>Enterobacteriaceae</taxon>
        <taxon>Salmonella</taxon>
    </lineage>
</organism>
<proteinExistence type="inferred from homology"/>
<gene>
    <name evidence="1" type="primary">rpiA</name>
    <name type="ordered locus">SCH_3004</name>
</gene>
<name>RPIA_SALCH</name>
<comment type="function">
    <text evidence="1">Catalyzes the reversible conversion of ribose-5-phosphate to ribulose 5-phosphate.</text>
</comment>
<comment type="catalytic activity">
    <reaction evidence="1">
        <text>aldehydo-D-ribose 5-phosphate = D-ribulose 5-phosphate</text>
        <dbReference type="Rhea" id="RHEA:14657"/>
        <dbReference type="ChEBI" id="CHEBI:58121"/>
        <dbReference type="ChEBI" id="CHEBI:58273"/>
        <dbReference type="EC" id="5.3.1.6"/>
    </reaction>
</comment>
<comment type="pathway">
    <text evidence="1">Carbohydrate degradation; pentose phosphate pathway; D-ribose 5-phosphate from D-ribulose 5-phosphate (non-oxidative stage): step 1/1.</text>
</comment>
<comment type="subunit">
    <text evidence="1">Homodimer.</text>
</comment>
<comment type="similarity">
    <text evidence="1">Belongs to the ribose 5-phosphate isomerase family.</text>
</comment>
<reference key="1">
    <citation type="journal article" date="2005" name="Nucleic Acids Res.">
        <title>The genome sequence of Salmonella enterica serovar Choleraesuis, a highly invasive and resistant zoonotic pathogen.</title>
        <authorList>
            <person name="Chiu C.-H."/>
            <person name="Tang P."/>
            <person name="Chu C."/>
            <person name="Hu S."/>
            <person name="Bao Q."/>
            <person name="Yu J."/>
            <person name="Chou Y.-Y."/>
            <person name="Wang H.-S."/>
            <person name="Lee Y.-S."/>
        </authorList>
    </citation>
    <scope>NUCLEOTIDE SEQUENCE [LARGE SCALE GENOMIC DNA]</scope>
    <source>
        <strain>SC-B67</strain>
    </source>
</reference>
<dbReference type="EC" id="5.3.1.6" evidence="1"/>
<dbReference type="EMBL" id="AE017220">
    <property type="protein sequence ID" value="AAX66910.1"/>
    <property type="molecule type" value="Genomic_DNA"/>
</dbReference>
<dbReference type="RefSeq" id="WP_000189741.1">
    <property type="nucleotide sequence ID" value="NC_006905.1"/>
</dbReference>
<dbReference type="SMR" id="Q57K52"/>
<dbReference type="KEGG" id="sec:SCH_3004"/>
<dbReference type="HOGENOM" id="CLU_056590_1_1_6"/>
<dbReference type="UniPathway" id="UPA00115">
    <property type="reaction ID" value="UER00412"/>
</dbReference>
<dbReference type="Proteomes" id="UP000000538">
    <property type="component" value="Chromosome"/>
</dbReference>
<dbReference type="GO" id="GO:0005829">
    <property type="term" value="C:cytosol"/>
    <property type="evidence" value="ECO:0007669"/>
    <property type="project" value="TreeGrafter"/>
</dbReference>
<dbReference type="GO" id="GO:0004751">
    <property type="term" value="F:ribose-5-phosphate isomerase activity"/>
    <property type="evidence" value="ECO:0007669"/>
    <property type="project" value="UniProtKB-UniRule"/>
</dbReference>
<dbReference type="GO" id="GO:0006014">
    <property type="term" value="P:D-ribose metabolic process"/>
    <property type="evidence" value="ECO:0007669"/>
    <property type="project" value="TreeGrafter"/>
</dbReference>
<dbReference type="GO" id="GO:0009052">
    <property type="term" value="P:pentose-phosphate shunt, non-oxidative branch"/>
    <property type="evidence" value="ECO:0007669"/>
    <property type="project" value="UniProtKB-UniRule"/>
</dbReference>
<dbReference type="CDD" id="cd01398">
    <property type="entry name" value="RPI_A"/>
    <property type="match status" value="1"/>
</dbReference>
<dbReference type="FunFam" id="3.30.70.260:FF:000004">
    <property type="entry name" value="Ribose-5-phosphate isomerase A"/>
    <property type="match status" value="1"/>
</dbReference>
<dbReference type="FunFam" id="3.40.50.1360:FF:000001">
    <property type="entry name" value="Ribose-5-phosphate isomerase A"/>
    <property type="match status" value="1"/>
</dbReference>
<dbReference type="Gene3D" id="3.30.70.260">
    <property type="match status" value="1"/>
</dbReference>
<dbReference type="Gene3D" id="3.40.50.1360">
    <property type="match status" value="1"/>
</dbReference>
<dbReference type="HAMAP" id="MF_00170">
    <property type="entry name" value="Rib_5P_isom_A"/>
    <property type="match status" value="1"/>
</dbReference>
<dbReference type="InterPro" id="IPR037171">
    <property type="entry name" value="NagB/RpiA_transferase-like"/>
</dbReference>
<dbReference type="InterPro" id="IPR020672">
    <property type="entry name" value="Ribose5P_isomerase_typA_subgr"/>
</dbReference>
<dbReference type="InterPro" id="IPR004788">
    <property type="entry name" value="Ribose5P_isomerase_type_A"/>
</dbReference>
<dbReference type="NCBIfam" id="NF001924">
    <property type="entry name" value="PRK00702.1"/>
    <property type="match status" value="1"/>
</dbReference>
<dbReference type="NCBIfam" id="TIGR00021">
    <property type="entry name" value="rpiA"/>
    <property type="match status" value="1"/>
</dbReference>
<dbReference type="PANTHER" id="PTHR11934">
    <property type="entry name" value="RIBOSE-5-PHOSPHATE ISOMERASE"/>
    <property type="match status" value="1"/>
</dbReference>
<dbReference type="PANTHER" id="PTHR11934:SF0">
    <property type="entry name" value="RIBOSE-5-PHOSPHATE ISOMERASE"/>
    <property type="match status" value="1"/>
</dbReference>
<dbReference type="Pfam" id="PF06026">
    <property type="entry name" value="Rib_5-P_isom_A"/>
    <property type="match status" value="1"/>
</dbReference>
<dbReference type="SUPFAM" id="SSF75445">
    <property type="entry name" value="D-ribose-5-phosphate isomerase (RpiA), lid domain"/>
    <property type="match status" value="1"/>
</dbReference>
<dbReference type="SUPFAM" id="SSF100950">
    <property type="entry name" value="NagB/RpiA/CoA transferase-like"/>
    <property type="match status" value="1"/>
</dbReference>
<keyword id="KW-0413">Isomerase</keyword>